<accession>P52294</accession>
<accession>D3DN93</accession>
<accession>Q6IBQ9</accession>
<accession>Q9BQ56</accession>
<sequence length="538" mass="60222">MTTPGKENFRLKSYKNKSLNPDEMRRRREEEGLQLRKQKREEQLFKRRNVATAEEETEEEVMSDGGFHEAQISNMEMAPGGVITSDMIEMIFSKSPEQQLSATQKFRKLLSKEPNPPIDEVISTPGVVARFVEFLKRKENCTLQFESAWVLTNIASGNSLQTRIVIQAGAVPIFIELLSSEFEDVQEQAVWALGNIAGDSTMCRDYVLDCNILPPLLQLFSKQNRLTMTRNAVWALSNLCRGKSPPPEFAKVSPCLNVLSWLLFVSDTDVLADACWALSYLSDGPNDKIQAVIDAGVCRRLVELLMHNDYKVVSPALRAVGNIVTGDDIQTQVILNCSALQSLLHLLSSPKESIKKEACWTISNITAGNRAQIQTVIDANIFPALISILQTAEFRTRKEAAWAITNATSGGSAEQIKYLVELGCIKPLCDLLTVMDSKIVQVALNGLENILRLGEQEAKRNGTGINPYCALIEEAYGLDKIEFLQSHENQEIYQKAFDLIEHYFGTEDEDSSIAPQVDLNQQQYIFQQCEAPMEGFQL</sequence>
<reference key="1">
    <citation type="journal article" date="1995" name="Virology">
        <title>NPI-1, the human homolog of SRP-1, interacts with influenza virus nucleoprotein.</title>
        <authorList>
            <person name="O'Neill R.E."/>
            <person name="Palese P."/>
        </authorList>
    </citation>
    <scope>NUCLEOTIDE SEQUENCE [MRNA]</scope>
</reference>
<reference key="2">
    <citation type="submission" date="2004-10" db="EMBL/GenBank/DDBJ databases">
        <title>Cloning of human full-length CDSs in BD Creator(TM) system donor vector.</title>
        <authorList>
            <person name="Kalnine N."/>
            <person name="Chen X."/>
            <person name="Rolfs A."/>
            <person name="Halleck A."/>
            <person name="Hines L."/>
            <person name="Eisenstein S."/>
            <person name="Koundinya M."/>
            <person name="Raphael J."/>
            <person name="Moreira D."/>
            <person name="Kelley T."/>
            <person name="LaBaer J."/>
            <person name="Lin Y."/>
            <person name="Phelan M."/>
            <person name="Farmer A."/>
        </authorList>
    </citation>
    <scope>NUCLEOTIDE SEQUENCE [LARGE SCALE MRNA]</scope>
    <scope>VARIANT ASN-73</scope>
</reference>
<reference key="3">
    <citation type="submission" date="2004-06" db="EMBL/GenBank/DDBJ databases">
        <title>Cloning of human full open reading frames in Gateway(TM) system entry vector (pDONR201).</title>
        <authorList>
            <person name="Ebert L."/>
            <person name="Schick M."/>
            <person name="Neubert P."/>
            <person name="Schatten R."/>
            <person name="Henze S."/>
            <person name="Korn B."/>
        </authorList>
    </citation>
    <scope>NUCLEOTIDE SEQUENCE [LARGE SCALE MRNA]</scope>
    <scope>VARIANT ASN-73</scope>
</reference>
<reference key="4">
    <citation type="journal article" date="2006" name="Nature">
        <title>The DNA sequence, annotation and analysis of human chromosome 3.</title>
        <authorList>
            <person name="Muzny D.M."/>
            <person name="Scherer S.E."/>
            <person name="Kaul R."/>
            <person name="Wang J."/>
            <person name="Yu J."/>
            <person name="Sudbrak R."/>
            <person name="Buhay C.J."/>
            <person name="Chen R."/>
            <person name="Cree A."/>
            <person name="Ding Y."/>
            <person name="Dugan-Rocha S."/>
            <person name="Gill R."/>
            <person name="Gunaratne P."/>
            <person name="Harris R.A."/>
            <person name="Hawes A.C."/>
            <person name="Hernandez J."/>
            <person name="Hodgson A.V."/>
            <person name="Hume J."/>
            <person name="Jackson A."/>
            <person name="Khan Z.M."/>
            <person name="Kovar-Smith C."/>
            <person name="Lewis L.R."/>
            <person name="Lozado R.J."/>
            <person name="Metzker M.L."/>
            <person name="Milosavljevic A."/>
            <person name="Miner G.R."/>
            <person name="Morgan M.B."/>
            <person name="Nazareth L.V."/>
            <person name="Scott G."/>
            <person name="Sodergren E."/>
            <person name="Song X.-Z."/>
            <person name="Steffen D."/>
            <person name="Wei S."/>
            <person name="Wheeler D.A."/>
            <person name="Wright M.W."/>
            <person name="Worley K.C."/>
            <person name="Yuan Y."/>
            <person name="Zhang Z."/>
            <person name="Adams C.Q."/>
            <person name="Ansari-Lari M.A."/>
            <person name="Ayele M."/>
            <person name="Brown M.J."/>
            <person name="Chen G."/>
            <person name="Chen Z."/>
            <person name="Clendenning J."/>
            <person name="Clerc-Blankenburg K.P."/>
            <person name="Chen R."/>
            <person name="Chen Z."/>
            <person name="Davis C."/>
            <person name="Delgado O."/>
            <person name="Dinh H.H."/>
            <person name="Dong W."/>
            <person name="Draper H."/>
            <person name="Ernst S."/>
            <person name="Fu G."/>
            <person name="Gonzalez-Garay M.L."/>
            <person name="Garcia D.K."/>
            <person name="Gillett W."/>
            <person name="Gu J."/>
            <person name="Hao B."/>
            <person name="Haugen E."/>
            <person name="Havlak P."/>
            <person name="He X."/>
            <person name="Hennig S."/>
            <person name="Hu S."/>
            <person name="Huang W."/>
            <person name="Jackson L.R."/>
            <person name="Jacob L.S."/>
            <person name="Kelly S.H."/>
            <person name="Kube M."/>
            <person name="Levy R."/>
            <person name="Li Z."/>
            <person name="Liu B."/>
            <person name="Liu J."/>
            <person name="Liu W."/>
            <person name="Lu J."/>
            <person name="Maheshwari M."/>
            <person name="Nguyen B.-V."/>
            <person name="Okwuonu G.O."/>
            <person name="Palmeiri A."/>
            <person name="Pasternak S."/>
            <person name="Perez L.M."/>
            <person name="Phelps K.A."/>
            <person name="Plopper F.J."/>
            <person name="Qiang B."/>
            <person name="Raymond C."/>
            <person name="Rodriguez R."/>
            <person name="Saenphimmachak C."/>
            <person name="Santibanez J."/>
            <person name="Shen H."/>
            <person name="Shen Y."/>
            <person name="Subramanian S."/>
            <person name="Tabor P.E."/>
            <person name="Verduzco D."/>
            <person name="Waldron L."/>
            <person name="Wang J."/>
            <person name="Wang J."/>
            <person name="Wang Q."/>
            <person name="Williams G.A."/>
            <person name="Wong G.K.-S."/>
            <person name="Yao Z."/>
            <person name="Zhang J."/>
            <person name="Zhang X."/>
            <person name="Zhao G."/>
            <person name="Zhou J."/>
            <person name="Zhou Y."/>
            <person name="Nelson D."/>
            <person name="Lehrach H."/>
            <person name="Reinhardt R."/>
            <person name="Naylor S.L."/>
            <person name="Yang H."/>
            <person name="Olson M."/>
            <person name="Weinstock G."/>
            <person name="Gibbs R.A."/>
        </authorList>
    </citation>
    <scope>NUCLEOTIDE SEQUENCE [LARGE SCALE GENOMIC DNA]</scope>
</reference>
<reference key="5">
    <citation type="submission" date="2005-09" db="EMBL/GenBank/DDBJ databases">
        <authorList>
            <person name="Mural R.J."/>
            <person name="Istrail S."/>
            <person name="Sutton G.G."/>
            <person name="Florea L."/>
            <person name="Halpern A.L."/>
            <person name="Mobarry C.M."/>
            <person name="Lippert R."/>
            <person name="Walenz B."/>
            <person name="Shatkay H."/>
            <person name="Dew I."/>
            <person name="Miller J.R."/>
            <person name="Flanigan M.J."/>
            <person name="Edwards N.J."/>
            <person name="Bolanos R."/>
            <person name="Fasulo D."/>
            <person name="Halldorsson B.V."/>
            <person name="Hannenhalli S."/>
            <person name="Turner R."/>
            <person name="Yooseph S."/>
            <person name="Lu F."/>
            <person name="Nusskern D.R."/>
            <person name="Shue B.C."/>
            <person name="Zheng X.H."/>
            <person name="Zhong F."/>
            <person name="Delcher A.L."/>
            <person name="Huson D.H."/>
            <person name="Kravitz S.A."/>
            <person name="Mouchard L."/>
            <person name="Reinert K."/>
            <person name="Remington K.A."/>
            <person name="Clark A.G."/>
            <person name="Waterman M.S."/>
            <person name="Eichler E.E."/>
            <person name="Adams M.D."/>
            <person name="Hunkapiller M.W."/>
            <person name="Myers E.W."/>
            <person name="Venter J.C."/>
        </authorList>
    </citation>
    <scope>NUCLEOTIDE SEQUENCE [LARGE SCALE GENOMIC DNA]</scope>
    <scope>VARIANT ASN-73</scope>
</reference>
<reference key="6">
    <citation type="journal article" date="2004" name="Genome Res.">
        <title>The status, quality, and expansion of the NIH full-length cDNA project: the Mammalian Gene Collection (MGC).</title>
        <authorList>
            <consortium name="The MGC Project Team"/>
        </authorList>
    </citation>
    <scope>NUCLEOTIDE SEQUENCE [LARGE SCALE MRNA]</scope>
    <scope>VARIANT ASN-73</scope>
    <source>
        <tissue>Lung</tissue>
    </source>
</reference>
<reference key="7">
    <citation type="journal article" date="1994" name="Proc. Natl. Acad. Sci. U.S.A.">
        <title>RAG-1 interacts with the repeated amino acid motif of the human homologue of the yeast protein SRP1.</title>
        <authorList>
            <person name="Cortes P."/>
            <person name="Ye Z.-S."/>
            <person name="Baltimore D."/>
        </authorList>
    </citation>
    <scope>INTERACTION WITH RAG1</scope>
</reference>
<reference key="8">
    <citation type="journal article" date="1995" name="Proc. Natl. Acad. Sci. U.S.A.">
        <title>Previously identified protein of uncertain function is karyopherin alpha and together with karyopherin beta docks import substrate at nuclear pore complexes.</title>
        <authorList>
            <person name="Moroianu J."/>
            <person name="Blobel G."/>
            <person name="Radu A."/>
        </authorList>
    </citation>
    <scope>FUNCTION</scope>
    <scope>SUBUNIT</scope>
    <scope>SUBCELLULAR LOCATION</scope>
</reference>
<reference key="9">
    <citation type="journal article" date="1996" name="Proc. Natl. Acad. Sci. U.S.A.">
        <title>The binding site of karyopherin alpha for karyopherin beta overlaps with a nuclear localization sequence.</title>
        <authorList>
            <person name="Moroianu J."/>
            <person name="Blobel G."/>
            <person name="Radu A."/>
        </authorList>
    </citation>
    <scope>PROTEIN SEQUENCE OF 481-495</scope>
    <scope>FUNCTION</scope>
    <scope>DOMAINS IBB</scope>
</reference>
<reference key="10">
    <citation type="journal article" date="1995" name="Proc. Natl. Acad. Sci. U.S.A.">
        <title>Mammalian karyopherin alpha 1 beta and alpha 2 beta heterodimers: alpha 1 or alpha 2 subunit binds nuclear localization signal and beta subunit interacts with peptide repeat-containing nucleoporins.</title>
        <authorList>
            <person name="Moroianu J."/>
            <person name="Hijikata M."/>
            <person name="Blobel G."/>
            <person name="Radu A."/>
        </authorList>
    </citation>
    <scope>SUBCELLULAR LOCATION</scope>
    <scope>SUBUNIT</scope>
</reference>
<reference key="11">
    <citation type="journal article" date="1998" name="EMBO J.">
        <title>Viral protein R regulates nuclear import of the HIV-1 pre-integration complex.</title>
        <authorList>
            <person name="Popov S."/>
            <person name="Rexach M."/>
            <person name="Zybarth G."/>
            <person name="Reiling N."/>
            <person name="Lee M.A."/>
            <person name="Ratner L."/>
            <person name="Lane C.M."/>
            <person name="Moore M.S."/>
            <person name="Blobel G."/>
            <person name="Bukrinsky M."/>
        </authorList>
    </citation>
    <scope>INTERACTION WITH HIV-1 VPR (MICROBIAL INFECTION)</scope>
</reference>
<reference key="12">
    <citation type="journal article" date="2000" name="Virology">
        <title>Epstein-barr virus nuclear antigen-1 binds to nuclear transporter karyopherin alpha1/NPI-1 in addition to karyopherin alpha2/Rch1.</title>
        <authorList>
            <person name="Ito S."/>
            <person name="Ikeda M."/>
            <person name="Kato N."/>
            <person name="Matsumoto A."/>
            <person name="Ishikawa Y."/>
            <person name="Kumakubo S."/>
            <person name="Yanagi K."/>
        </authorList>
    </citation>
    <scope>INTERACTION WITH EPSTEIN-BARR VIRUS EBNA1 (MICROBIAL INFECTION)</scope>
</reference>
<reference key="13">
    <citation type="journal article" date="2003" name="J. Virol.">
        <title>A nonconventional nuclear localization signal within the UL84 protein of human cytomegalovirus mediates nuclear import via the importin alpha/beta pathway.</title>
        <authorList>
            <person name="Lischka P."/>
            <person name="Sorg G."/>
            <person name="Kann M."/>
            <person name="Winkler M."/>
            <person name="Stamminger T."/>
        </authorList>
    </citation>
    <scope>INTERACTION WITH HCMV UL84 (MICROBIAL INFECTION)</scope>
</reference>
<reference key="14">
    <citation type="journal article" date="2005" name="Nucleic Acids Res.">
        <title>Analysis of nuclear transport signals in the human apurinic/apyrimidinic endonuclease (APE1/Ref1).</title>
        <authorList>
            <person name="Jackson E.B."/>
            <person name="Theriot C.A."/>
            <person name="Chattopadhyay R."/>
            <person name="Mitra S."/>
            <person name="Izumi T."/>
        </authorList>
    </citation>
    <scope>INTERACTION WITH APEX1</scope>
</reference>
<reference key="15">
    <citation type="journal article" date="2006" name="J. Virol.">
        <title>Ebola virus VP24 binds karyopherin alpha-1 and blocks STAT1 nuclear accumulation.</title>
        <authorList>
            <person name="Reid S.P."/>
            <person name="Leung L.W."/>
            <person name="Hartman A.L."/>
            <person name="Martinez O."/>
            <person name="Shaw M.L."/>
            <person name="Carbonnelle C."/>
            <person name="Volchkov V.E."/>
            <person name="Nichol S.T."/>
            <person name="Basler C.F."/>
        </authorList>
    </citation>
    <scope>INTERACTION WITH EBOLAVIRUS VP24 (MICROBIAL INFECTION)</scope>
</reference>
<reference key="16">
    <citation type="journal article" date="2007" name="J. Virol.">
        <title>Nuclear import and export of Venezuelan equine encephalitis virus nonstructural protein 2.</title>
        <authorList>
            <person name="Montgomery S.A."/>
            <person name="Johnston R.E."/>
        </authorList>
    </citation>
    <scope>INTERACTION WITH VENEZUELAN EQUINE ENCEPHALITIS VIRUS PROTEASE NSP2 (MICROBIAL INFECTION)</scope>
</reference>
<reference key="17">
    <citation type="journal article" date="2007" name="J. Virol.">
        <title>Ebola virus VP24 proteins inhibit the interaction of NPI-1 subfamily karyopherin alpha proteins with activated STAT1.</title>
        <authorList>
            <person name="Reid S.P."/>
            <person name="Valmas C."/>
            <person name="Martinez O."/>
            <person name="Sanchez F.M."/>
            <person name="Basler C.F."/>
        </authorList>
    </citation>
    <scope>INTERACTION WITH EBOLAVIRUS VP24 (MICROBIAL INFECTION)</scope>
</reference>
<reference key="18">
    <citation type="journal article" date="2008" name="Mol. Cell">
        <title>Kinase-selective enrichment enables quantitative phosphoproteomics of the kinome across the cell cycle.</title>
        <authorList>
            <person name="Daub H."/>
            <person name="Olsen J.V."/>
            <person name="Bairlein M."/>
            <person name="Gnad F."/>
            <person name="Oppermann F.S."/>
            <person name="Korner R."/>
            <person name="Greff Z."/>
            <person name="Keri G."/>
            <person name="Stemmann O."/>
            <person name="Mann M."/>
        </authorList>
    </citation>
    <scope>IDENTIFICATION BY MASS SPECTROMETRY [LARGE SCALE ANALYSIS]</scope>
    <source>
        <tissue>Cervix carcinoma</tissue>
    </source>
</reference>
<reference key="19">
    <citation type="journal article" date="2009" name="Mol. Immunol.">
        <title>Karyopherin alpha 1 is a putative substrate of the RAG1 ubiquitin ligase.</title>
        <authorList>
            <person name="Simkus C."/>
            <person name="Makiya M."/>
            <person name="Jones J.M."/>
        </authorList>
    </citation>
    <scope>UBIQUITINATION</scope>
</reference>
<reference key="20">
    <citation type="journal article" date="2011" name="BMC Syst. Biol.">
        <title>Initial characterization of the human central proteome.</title>
        <authorList>
            <person name="Burkard T.R."/>
            <person name="Planyavsky M."/>
            <person name="Kaupe I."/>
            <person name="Breitwieser F.P."/>
            <person name="Buerckstuemmer T."/>
            <person name="Bennett K.L."/>
            <person name="Superti-Furga G."/>
            <person name="Colinge J."/>
        </authorList>
    </citation>
    <scope>IDENTIFICATION BY MASS SPECTROMETRY [LARGE SCALE ANALYSIS]</scope>
</reference>
<reference key="21">
    <citation type="journal article" date="2011" name="J. Biol. Chem.">
        <title>Importin alpha protein acts as a negative regulator for Snail protein nuclear import.</title>
        <authorList>
            <person name="Sekimoto T."/>
            <person name="Miyamoto Y."/>
            <person name="Arai S."/>
            <person name="Yoneda Y."/>
        </authorList>
    </citation>
    <scope>INTERACTION WITH SNAI1</scope>
</reference>
<reference key="22">
    <citation type="journal article" date="2011" name="J. Biol. Chem.">
        <title>CTNNBL1 is a novel nuclear localization sequence-binding protein that recognizes RNA-splicing factors CDC5L and Prp31.</title>
        <authorList>
            <person name="Ganesh K."/>
            <person name="Adam S."/>
            <person name="Taylor B."/>
            <person name="Simpson P."/>
            <person name="Rada C."/>
            <person name="Neuberger M."/>
        </authorList>
    </citation>
    <scope>INTERACTION WITH CTNNBL1 AND AICDA</scope>
</reference>
<reference key="23">
    <citation type="journal article" date="2012" name="FEBS Lett.">
        <title>Characterization of nuclear import and export signals determining the subcellular localization of WD repeat-containing protein 42A (WDR42A).</title>
        <authorList>
            <person name="Wu F."/>
            <person name="Wang S."/>
            <person name="Xing J."/>
            <person name="Li M."/>
            <person name="Zheng C."/>
        </authorList>
    </citation>
    <scope>INTERACTION WITH DCAF8</scope>
</reference>
<reference key="24">
    <citation type="journal article" date="2012" name="Proc. Natl. Acad. Sci. U.S.A.">
        <title>N-terminal acetylome analyses and functional insights of the N-terminal acetyltransferase NatB.</title>
        <authorList>
            <person name="Van Damme P."/>
            <person name="Lasa M."/>
            <person name="Polevoda B."/>
            <person name="Gazquez C."/>
            <person name="Elosegui-Artola A."/>
            <person name="Kim D.S."/>
            <person name="De Juan-Pardo E."/>
            <person name="Demeyer K."/>
            <person name="Hole K."/>
            <person name="Larrea E."/>
            <person name="Timmerman E."/>
            <person name="Prieto J."/>
            <person name="Arnesen T."/>
            <person name="Sherman F."/>
            <person name="Gevaert K."/>
            <person name="Aldabe R."/>
        </authorList>
    </citation>
    <scope>ACETYLATION [LARGE SCALE ANALYSIS] AT MET-1 AND THR-2</scope>
    <scope>CLEAVAGE OF INITIATOR METHIONINE [LARGE SCALE ANALYSIS]</scope>
    <scope>IDENTIFICATION BY MASS SPECTROMETRY [LARGE SCALE ANALYSIS]</scope>
</reference>
<reference key="25">
    <citation type="journal article" date="2013" name="J. Proteome Res.">
        <title>Toward a comprehensive characterization of a human cancer cell phosphoproteome.</title>
        <authorList>
            <person name="Zhou H."/>
            <person name="Di Palma S."/>
            <person name="Preisinger C."/>
            <person name="Peng M."/>
            <person name="Polat A.N."/>
            <person name="Heck A.J."/>
            <person name="Mohammed S."/>
        </authorList>
    </citation>
    <scope>PHOSPHORYLATION [LARGE SCALE ANALYSIS] AT THR-3</scope>
    <scope>IDENTIFICATION BY MASS SPECTROMETRY [LARGE SCALE ANALYSIS]</scope>
    <source>
        <tissue>Cervix carcinoma</tissue>
        <tissue>Erythroleukemia</tissue>
    </source>
</reference>
<reference key="26">
    <citation type="journal article" date="2014" name="J. Proteomics">
        <title>An enzyme assisted RP-RPLC approach for in-depth analysis of human liver phosphoproteome.</title>
        <authorList>
            <person name="Bian Y."/>
            <person name="Song C."/>
            <person name="Cheng K."/>
            <person name="Dong M."/>
            <person name="Wang F."/>
            <person name="Huang J."/>
            <person name="Sun D."/>
            <person name="Wang L."/>
            <person name="Ye M."/>
            <person name="Zou H."/>
        </authorList>
    </citation>
    <scope>PHOSPHORYLATION [LARGE SCALE ANALYSIS] AT SER-63</scope>
    <scope>IDENTIFICATION BY MASS SPECTROMETRY [LARGE SCALE ANALYSIS]</scope>
    <source>
        <tissue>Liver</tissue>
    </source>
</reference>
<reference key="27">
    <citation type="journal article" date="2016" name="Sci. Rep.">
        <title>Identification of the nuclear localisation signal of O-GlcNAc transferase and its nuclear import regulation.</title>
        <authorList>
            <person name="Seo H.G."/>
            <person name="Kim H.B."/>
            <person name="Kang M.J."/>
            <person name="Ryum J.H."/>
            <person name="Yi E.C."/>
            <person name="Cho J.W."/>
        </authorList>
    </citation>
    <scope>FUNCTION</scope>
</reference>
<reference key="28">
    <citation type="journal article" date="2017" name="Mol. Cell">
        <title>Nucleus-Translocated ACSS2 Promotes Gene Transcription for Lysosomal Biogenesis and Autophagy.</title>
        <authorList>
            <person name="Li X."/>
            <person name="Yu W."/>
            <person name="Qian X."/>
            <person name="Xia Y."/>
            <person name="Zheng Y."/>
            <person name="Lee J.H."/>
            <person name="Li W."/>
            <person name="Lyu J."/>
            <person name="Rao G."/>
            <person name="Zhang X."/>
            <person name="Qian C.N."/>
            <person name="Rozen S.G."/>
            <person name="Jiang T."/>
            <person name="Lu Z."/>
        </authorList>
    </citation>
    <scope>INTERACTION WITH ACSS2</scope>
</reference>
<reference key="29">
    <citation type="journal article" date="2018" name="Biochem. J.">
        <title>Intersectin goes nuclear: secret life of an endocytic protein.</title>
        <authorList>
            <person name="Alvisi G."/>
            <person name="Paolini L."/>
            <person name="Contarini A."/>
            <person name="Zambarda C."/>
            <person name="Di Antonio V."/>
            <person name="Colosini A."/>
            <person name="Mercandelli N."/>
            <person name="Timmoneri M."/>
            <person name="Palu G."/>
            <person name="Caimi L."/>
            <person name="Ricotta D."/>
            <person name="Radeghieri A."/>
        </authorList>
    </citation>
    <scope>INTERACTION WITH ITSN1 ISOFORM 2</scope>
</reference>
<reference key="30">
    <citation type="journal article" date="2019" name="Virology">
        <title>Nucleocytoplasmic shuttling of the human parainfluenza virus type 2 phosphoprotein.</title>
        <authorList>
            <person name="Ohtsuka J."/>
            <person name="Matsumoto Y."/>
            <person name="Ohta K."/>
            <person name="Fukumura M."/>
            <person name="Tsurudome M."/>
            <person name="Nosaka T."/>
            <person name="Nishio M."/>
        </authorList>
    </citation>
    <scope>INTERACTION WITH HPIV-2 VIRUS PROTEINS P AND V (MICROBIAL INFECTION)</scope>
</reference>
<reference key="31">
    <citation type="journal article" date="2022" name="J. Cell Biol.">
        <title>Tumor suppressor BAP1 nuclear import is governed by transportin-1.</title>
        <authorList>
            <person name="Yang T.J."/>
            <person name="Li T.N."/>
            <person name="Huang R.S."/>
            <person name="Pan M.Y."/>
            <person name="Lin S.Y."/>
            <person name="Lin S."/>
            <person name="Wu K.P."/>
            <person name="Wang L.H."/>
            <person name="Hsu S.D."/>
        </authorList>
    </citation>
    <scope>FUNCTION</scope>
    <scope>INTERACTION WITH BAP1</scope>
    <scope>IDENTIFICATION BY MASS SPECTROMETRY</scope>
</reference>
<name>IMA5_HUMAN</name>
<organism>
    <name type="scientific">Homo sapiens</name>
    <name type="common">Human</name>
    <dbReference type="NCBI Taxonomy" id="9606"/>
    <lineage>
        <taxon>Eukaryota</taxon>
        <taxon>Metazoa</taxon>
        <taxon>Chordata</taxon>
        <taxon>Craniata</taxon>
        <taxon>Vertebrata</taxon>
        <taxon>Euteleostomi</taxon>
        <taxon>Mammalia</taxon>
        <taxon>Eutheria</taxon>
        <taxon>Euarchontoglires</taxon>
        <taxon>Primates</taxon>
        <taxon>Haplorrhini</taxon>
        <taxon>Catarrhini</taxon>
        <taxon>Hominidae</taxon>
        <taxon>Homo</taxon>
    </lineage>
</organism>
<evidence type="ECO:0000250" key="1">
    <source>
        <dbReference type="UniProtKB" id="P52293"/>
    </source>
</evidence>
<evidence type="ECO:0000250" key="2">
    <source>
        <dbReference type="UniProtKB" id="P83953"/>
    </source>
</evidence>
<evidence type="ECO:0000250" key="3">
    <source>
        <dbReference type="UniProtKB" id="Q60960"/>
    </source>
</evidence>
<evidence type="ECO:0000255" key="4">
    <source>
        <dbReference type="PROSITE-ProRule" id="PRU00561"/>
    </source>
</evidence>
<evidence type="ECO:0000256" key="5">
    <source>
        <dbReference type="SAM" id="MobiDB-lite"/>
    </source>
</evidence>
<evidence type="ECO:0000269" key="6">
    <source>
    </source>
</evidence>
<evidence type="ECO:0000269" key="7">
    <source>
    </source>
</evidence>
<evidence type="ECO:0000269" key="8">
    <source>
    </source>
</evidence>
<evidence type="ECO:0000269" key="9">
    <source>
    </source>
</evidence>
<evidence type="ECO:0000269" key="10">
    <source>
    </source>
</evidence>
<evidence type="ECO:0000269" key="11">
    <source>
    </source>
</evidence>
<evidence type="ECO:0000269" key="12">
    <source>
    </source>
</evidence>
<evidence type="ECO:0000269" key="13">
    <source>
    </source>
</evidence>
<evidence type="ECO:0000269" key="14">
    <source>
    </source>
</evidence>
<evidence type="ECO:0000269" key="15">
    <source>
    </source>
</evidence>
<evidence type="ECO:0000269" key="16">
    <source>
    </source>
</evidence>
<evidence type="ECO:0000269" key="17">
    <source>
    </source>
</evidence>
<evidence type="ECO:0000269" key="18">
    <source>
    </source>
</evidence>
<evidence type="ECO:0000269" key="19">
    <source>
    </source>
</evidence>
<evidence type="ECO:0000269" key="20">
    <source>
    </source>
</evidence>
<evidence type="ECO:0000269" key="21">
    <source>
    </source>
</evidence>
<evidence type="ECO:0000269" key="22">
    <source>
    </source>
</evidence>
<evidence type="ECO:0000269" key="23">
    <source>
    </source>
</evidence>
<evidence type="ECO:0000269" key="24">
    <source>
    </source>
</evidence>
<evidence type="ECO:0000269" key="25">
    <source>
    </source>
</evidence>
<evidence type="ECO:0000269" key="26">
    <source>
    </source>
</evidence>
<evidence type="ECO:0000269" key="27">
    <source ref="2"/>
</evidence>
<evidence type="ECO:0000269" key="28">
    <source ref="3"/>
</evidence>
<evidence type="ECO:0000269" key="29">
    <source ref="5"/>
</evidence>
<evidence type="ECO:0000303" key="30">
    <source>
    </source>
</evidence>
<evidence type="ECO:0000303" key="31">
    <source>
    </source>
</evidence>
<evidence type="ECO:0000305" key="32"/>
<evidence type="ECO:0007744" key="33">
    <source>
    </source>
</evidence>
<evidence type="ECO:0007744" key="34">
    <source>
    </source>
</evidence>
<evidence type="ECO:0007744" key="35">
    <source>
    </source>
</evidence>
<evidence type="ECO:0007829" key="36">
    <source>
        <dbReference type="PDB" id="2JDQ"/>
    </source>
</evidence>
<evidence type="ECO:0007829" key="37">
    <source>
        <dbReference type="PDB" id="3TJ3"/>
    </source>
</evidence>
<keyword id="KW-0002">3D-structure</keyword>
<keyword id="KW-0007">Acetylation</keyword>
<keyword id="KW-0963">Cytoplasm</keyword>
<keyword id="KW-0903">Direct protein sequencing</keyword>
<keyword id="KW-0945">Host-virus interaction</keyword>
<keyword id="KW-0539">Nucleus</keyword>
<keyword id="KW-0597">Phosphoprotein</keyword>
<keyword id="KW-0653">Protein transport</keyword>
<keyword id="KW-1267">Proteomics identification</keyword>
<keyword id="KW-1185">Reference proteome</keyword>
<keyword id="KW-0677">Repeat</keyword>
<keyword id="KW-0813">Transport</keyword>
<keyword id="KW-0832">Ubl conjugation</keyword>
<protein>
    <recommendedName>
        <fullName>Importin subunit alpha-5</fullName>
    </recommendedName>
    <alternativeName>
        <fullName evidence="31">Karyopherin subunit alpha-1</fullName>
    </alternativeName>
    <alternativeName>
        <fullName evidence="30">Nucleoprotein interactor 1</fullName>
        <shortName evidence="30">NPI-1</shortName>
    </alternativeName>
    <alternativeName>
        <fullName>RAG cohort protein 2</fullName>
    </alternativeName>
    <alternativeName>
        <fullName>SRP1-beta</fullName>
    </alternativeName>
    <component>
        <recommendedName>
            <fullName>Importin subunit alpha-5, N-terminally processed</fullName>
        </recommendedName>
    </component>
</protein>
<dbReference type="EMBL" id="S75295">
    <property type="protein sequence ID" value="AAC60648.1"/>
    <property type="molecule type" value="mRNA"/>
</dbReference>
<dbReference type="EMBL" id="BT006959">
    <property type="protein sequence ID" value="AAP35605.1"/>
    <property type="molecule type" value="mRNA"/>
</dbReference>
<dbReference type="EMBL" id="CR456743">
    <property type="protein sequence ID" value="CAG33024.1"/>
    <property type="molecule type" value="mRNA"/>
</dbReference>
<dbReference type="EMBL" id="AC083798">
    <property type="status" value="NOT_ANNOTATED_CDS"/>
    <property type="molecule type" value="Genomic_DNA"/>
</dbReference>
<dbReference type="EMBL" id="AC096861">
    <property type="status" value="NOT_ANNOTATED_CDS"/>
    <property type="molecule type" value="Genomic_DNA"/>
</dbReference>
<dbReference type="EMBL" id="CH471052">
    <property type="protein sequence ID" value="EAW79482.1"/>
    <property type="molecule type" value="Genomic_DNA"/>
</dbReference>
<dbReference type="EMBL" id="CH471052">
    <property type="protein sequence ID" value="EAW79483.1"/>
    <property type="molecule type" value="Genomic_DNA"/>
</dbReference>
<dbReference type="EMBL" id="BC002374">
    <property type="protein sequence ID" value="AAH02374.1"/>
    <property type="molecule type" value="mRNA"/>
</dbReference>
<dbReference type="EMBL" id="BC003009">
    <property type="protein sequence ID" value="AAH03009.1"/>
    <property type="molecule type" value="mRNA"/>
</dbReference>
<dbReference type="CCDS" id="CCDS3013.1"/>
<dbReference type="PIR" id="I59931">
    <property type="entry name" value="I59931"/>
</dbReference>
<dbReference type="RefSeq" id="NP_002255.3">
    <property type="nucleotide sequence ID" value="NM_002264.4"/>
</dbReference>
<dbReference type="RefSeq" id="XP_005247494.1">
    <property type="nucleotide sequence ID" value="XM_005247437.5"/>
</dbReference>
<dbReference type="RefSeq" id="XP_024309282.1">
    <property type="nucleotide sequence ID" value="XM_024453514.2"/>
</dbReference>
<dbReference type="PDB" id="2JDQ">
    <property type="method" value="X-ray"/>
    <property type="resolution" value="2.20 A"/>
    <property type="chains" value="A/B=66-512"/>
</dbReference>
<dbReference type="PDB" id="3TJ3">
    <property type="method" value="X-ray"/>
    <property type="resolution" value="2.70 A"/>
    <property type="chains" value="A/B=66-512"/>
</dbReference>
<dbReference type="PDB" id="4B18">
    <property type="method" value="X-ray"/>
    <property type="resolution" value="2.52 A"/>
    <property type="chains" value="A=66-512"/>
</dbReference>
<dbReference type="PDB" id="6WX9">
    <property type="method" value="X-ray"/>
    <property type="resolution" value="2.80 A"/>
    <property type="chains" value="A=73-538"/>
</dbReference>
<dbReference type="PDBsum" id="2JDQ"/>
<dbReference type="PDBsum" id="3TJ3"/>
<dbReference type="PDBsum" id="4B18"/>
<dbReference type="PDBsum" id="6WX9"/>
<dbReference type="SMR" id="P52294"/>
<dbReference type="BioGRID" id="110034">
    <property type="interactions" value="356"/>
</dbReference>
<dbReference type="ComplexPortal" id="CPX-1055">
    <property type="entry name" value="Importin complex, KPNA1 variant"/>
</dbReference>
<dbReference type="CORUM" id="P52294"/>
<dbReference type="DIP" id="DIP-29296N"/>
<dbReference type="ELM" id="P52294"/>
<dbReference type="FunCoup" id="P52294">
    <property type="interactions" value="2662"/>
</dbReference>
<dbReference type="IntAct" id="P52294">
    <property type="interactions" value="256"/>
</dbReference>
<dbReference type="MINT" id="P52294"/>
<dbReference type="STRING" id="9606.ENSP00000343701"/>
<dbReference type="TCDB" id="1.I.1.1.3">
    <property type="family name" value="the nuclear pore complex (npc) family"/>
</dbReference>
<dbReference type="GlyGen" id="P52294">
    <property type="glycosylation" value="1 site, 1 O-linked glycan (1 site)"/>
</dbReference>
<dbReference type="iPTMnet" id="P52294"/>
<dbReference type="PhosphoSitePlus" id="P52294"/>
<dbReference type="SwissPalm" id="P52294"/>
<dbReference type="BioMuta" id="KPNA1"/>
<dbReference type="DMDM" id="296439328"/>
<dbReference type="jPOST" id="P52294"/>
<dbReference type="MassIVE" id="P52294"/>
<dbReference type="PaxDb" id="9606-ENSP00000343701"/>
<dbReference type="PeptideAtlas" id="P52294"/>
<dbReference type="ProteomicsDB" id="56476"/>
<dbReference type="Pumba" id="P52294"/>
<dbReference type="Antibodypedia" id="32899">
    <property type="antibodies" value="387 antibodies from 38 providers"/>
</dbReference>
<dbReference type="DNASU" id="3836"/>
<dbReference type="Ensembl" id="ENST00000344337.11">
    <property type="protein sequence ID" value="ENSP00000343701.6"/>
    <property type="gene ID" value="ENSG00000114030.13"/>
</dbReference>
<dbReference type="GeneID" id="3836"/>
<dbReference type="KEGG" id="hsa:3836"/>
<dbReference type="MANE-Select" id="ENST00000344337.11">
    <property type="protein sequence ID" value="ENSP00000343701.6"/>
    <property type="RefSeq nucleotide sequence ID" value="NM_002264.4"/>
    <property type="RefSeq protein sequence ID" value="NP_002255.3"/>
</dbReference>
<dbReference type="UCSC" id="uc003efe.3">
    <property type="organism name" value="human"/>
</dbReference>
<dbReference type="AGR" id="HGNC:6394"/>
<dbReference type="CTD" id="3836"/>
<dbReference type="DisGeNET" id="3836"/>
<dbReference type="GeneCards" id="KPNA1"/>
<dbReference type="HGNC" id="HGNC:6394">
    <property type="gene designation" value="KPNA1"/>
</dbReference>
<dbReference type="HPA" id="ENSG00000114030">
    <property type="expression patterns" value="Low tissue specificity"/>
</dbReference>
<dbReference type="MIM" id="600686">
    <property type="type" value="gene"/>
</dbReference>
<dbReference type="neXtProt" id="NX_P52294"/>
<dbReference type="OpenTargets" id="ENSG00000114030"/>
<dbReference type="PharmGKB" id="PA30185"/>
<dbReference type="VEuPathDB" id="HostDB:ENSG00000114030"/>
<dbReference type="eggNOG" id="KOG0166">
    <property type="taxonomic scope" value="Eukaryota"/>
</dbReference>
<dbReference type="GeneTree" id="ENSGT01050000244950"/>
<dbReference type="HOGENOM" id="CLU_018084_6_0_1"/>
<dbReference type="InParanoid" id="P52294"/>
<dbReference type="OMA" id="MVRNATW"/>
<dbReference type="OrthoDB" id="29145at2759"/>
<dbReference type="PAN-GO" id="P52294">
    <property type="GO annotations" value="6 GO annotations based on evolutionary models"/>
</dbReference>
<dbReference type="PhylomeDB" id="P52294"/>
<dbReference type="TreeFam" id="TF354205"/>
<dbReference type="PathwayCommons" id="P52294"/>
<dbReference type="Reactome" id="R-HSA-1169408">
    <property type="pathway name" value="ISG15 antiviral mechanism"/>
</dbReference>
<dbReference type="Reactome" id="R-HSA-140342">
    <property type="pathway name" value="Apoptosis induced DNA fragmentation"/>
</dbReference>
<dbReference type="Reactome" id="R-HSA-162592">
    <property type="pathway name" value="Integration of provirus"/>
</dbReference>
<dbReference type="Reactome" id="R-HSA-168271">
    <property type="pathway name" value="Transport of Ribonucleoproteins into the Host Nucleus"/>
</dbReference>
<dbReference type="Reactome" id="R-HSA-168276">
    <property type="pathway name" value="NS1 Mediated Effects on Host Pathways"/>
</dbReference>
<dbReference type="Reactome" id="R-HSA-180910">
    <property type="pathway name" value="Vpr-mediated nuclear import of PICs"/>
</dbReference>
<dbReference type="Reactome" id="R-HSA-68616">
    <property type="pathway name" value="Assembly of the ORC complex at the origin of replication"/>
</dbReference>
<dbReference type="Reactome" id="R-HSA-909733">
    <property type="pathway name" value="Interferon alpha/beta signaling"/>
</dbReference>
<dbReference type="Reactome" id="R-HSA-9636249">
    <property type="pathway name" value="Inhibition of nitric oxide production"/>
</dbReference>
<dbReference type="SignaLink" id="P52294"/>
<dbReference type="SIGNOR" id="P52294"/>
<dbReference type="BioGRID-ORCS" id="3836">
    <property type="hits" value="21 hits in 1167 CRISPR screens"/>
</dbReference>
<dbReference type="CD-CODE" id="DEE660B4">
    <property type="entry name" value="Stress granule"/>
</dbReference>
<dbReference type="CD-CODE" id="FB4E32DD">
    <property type="entry name" value="Presynaptic clusters and postsynaptic densities"/>
</dbReference>
<dbReference type="ChiTaRS" id="KPNA1">
    <property type="organism name" value="human"/>
</dbReference>
<dbReference type="EvolutionaryTrace" id="P52294"/>
<dbReference type="GeneWiki" id="Karyopherin_alpha_1"/>
<dbReference type="GenomeRNAi" id="3836"/>
<dbReference type="Pharos" id="P52294">
    <property type="development level" value="Tbio"/>
</dbReference>
<dbReference type="PRO" id="PR:P52294"/>
<dbReference type="Proteomes" id="UP000005640">
    <property type="component" value="Chromosome 3"/>
</dbReference>
<dbReference type="RNAct" id="P52294">
    <property type="molecule type" value="protein"/>
</dbReference>
<dbReference type="Bgee" id="ENSG00000114030">
    <property type="expression patterns" value="Expressed in gluteal muscle and 203 other cell types or tissues"/>
</dbReference>
<dbReference type="ExpressionAtlas" id="P52294">
    <property type="expression patterns" value="baseline and differential"/>
</dbReference>
<dbReference type="GO" id="GO:0005737">
    <property type="term" value="C:cytoplasm"/>
    <property type="evidence" value="ECO:0000304"/>
    <property type="project" value="ProtInc"/>
</dbReference>
<dbReference type="GO" id="GO:0005829">
    <property type="term" value="C:cytosol"/>
    <property type="evidence" value="ECO:0000314"/>
    <property type="project" value="UniProtKB"/>
</dbReference>
<dbReference type="GO" id="GO:0030425">
    <property type="term" value="C:dendrite"/>
    <property type="evidence" value="ECO:0000250"/>
    <property type="project" value="UniProtKB"/>
</dbReference>
<dbReference type="GO" id="GO:0098978">
    <property type="term" value="C:glutamatergic synapse"/>
    <property type="evidence" value="ECO:0007669"/>
    <property type="project" value="Ensembl"/>
</dbReference>
<dbReference type="GO" id="GO:0042564">
    <property type="term" value="C:NLS-dependent protein nuclear import complex"/>
    <property type="evidence" value="ECO:0000353"/>
    <property type="project" value="ComplexPortal"/>
</dbReference>
<dbReference type="GO" id="GO:0005643">
    <property type="term" value="C:nuclear pore"/>
    <property type="evidence" value="ECO:0000304"/>
    <property type="project" value="ProtInc"/>
</dbReference>
<dbReference type="GO" id="GO:0005654">
    <property type="term" value="C:nucleoplasm"/>
    <property type="evidence" value="ECO:0000314"/>
    <property type="project" value="UniProtKB"/>
</dbReference>
<dbReference type="GO" id="GO:0005634">
    <property type="term" value="C:nucleus"/>
    <property type="evidence" value="ECO:0000250"/>
    <property type="project" value="UniProtKB"/>
</dbReference>
<dbReference type="GO" id="GO:0014069">
    <property type="term" value="C:postsynaptic density"/>
    <property type="evidence" value="ECO:0007669"/>
    <property type="project" value="Ensembl"/>
</dbReference>
<dbReference type="GO" id="GO:0061608">
    <property type="term" value="F:nuclear import signal receptor activity"/>
    <property type="evidence" value="ECO:0000314"/>
    <property type="project" value="UniProtKB"/>
</dbReference>
<dbReference type="GO" id="GO:0008139">
    <property type="term" value="F:nuclear localization sequence binding"/>
    <property type="evidence" value="ECO:0000318"/>
    <property type="project" value="GO_Central"/>
</dbReference>
<dbReference type="GO" id="GO:0006607">
    <property type="term" value="P:NLS-bearing protein import into nucleus"/>
    <property type="evidence" value="ECO:0000314"/>
    <property type="project" value="UniProtKB"/>
</dbReference>
<dbReference type="GO" id="GO:0099527">
    <property type="term" value="P:postsynapse to nucleus signaling pathway"/>
    <property type="evidence" value="ECO:0000318"/>
    <property type="project" value="GO_Central"/>
</dbReference>
<dbReference type="GO" id="GO:0006606">
    <property type="term" value="P:protein import into nucleus"/>
    <property type="evidence" value="ECO:0000250"/>
    <property type="project" value="ComplexPortal"/>
</dbReference>
<dbReference type="GO" id="GO:0042981">
    <property type="term" value="P:regulation of apoptotic process"/>
    <property type="evidence" value="ECO:0007669"/>
    <property type="project" value="Ensembl"/>
</dbReference>
<dbReference type="GO" id="GO:0060828">
    <property type="term" value="P:regulation of canonical Wnt signaling pathway"/>
    <property type="evidence" value="ECO:0007669"/>
    <property type="project" value="Ensembl"/>
</dbReference>
<dbReference type="GO" id="GO:0000018">
    <property type="term" value="P:regulation of DNA recombination"/>
    <property type="evidence" value="ECO:0000304"/>
    <property type="project" value="ProtInc"/>
</dbReference>
<dbReference type="GO" id="GO:0014901">
    <property type="term" value="P:satellite cell activation involved in skeletal muscle regeneration"/>
    <property type="evidence" value="ECO:0007669"/>
    <property type="project" value="Ensembl"/>
</dbReference>
<dbReference type="GO" id="GO:0014841">
    <property type="term" value="P:skeletal muscle satellite cell proliferation"/>
    <property type="evidence" value="ECO:0007669"/>
    <property type="project" value="Ensembl"/>
</dbReference>
<dbReference type="FunFam" id="1.20.5.690:FF:000001">
    <property type="entry name" value="Importin subunit alpha"/>
    <property type="match status" value="1"/>
</dbReference>
<dbReference type="FunFam" id="1.25.10.10:FF:000013">
    <property type="entry name" value="Importin subunit alpha"/>
    <property type="match status" value="1"/>
</dbReference>
<dbReference type="Gene3D" id="1.20.5.690">
    <property type="entry name" value="Importin-alpha, importin-beta-binding domain"/>
    <property type="match status" value="1"/>
</dbReference>
<dbReference type="Gene3D" id="1.25.10.10">
    <property type="entry name" value="Leucine-rich Repeat Variant"/>
    <property type="match status" value="1"/>
</dbReference>
<dbReference type="InterPro" id="IPR011989">
    <property type="entry name" value="ARM-like"/>
</dbReference>
<dbReference type="InterPro" id="IPR016024">
    <property type="entry name" value="ARM-type_fold"/>
</dbReference>
<dbReference type="InterPro" id="IPR032413">
    <property type="entry name" value="Arm_3"/>
</dbReference>
<dbReference type="InterPro" id="IPR000225">
    <property type="entry name" value="Armadillo"/>
</dbReference>
<dbReference type="InterPro" id="IPR002652">
    <property type="entry name" value="Importin-a_IBB"/>
</dbReference>
<dbReference type="InterPro" id="IPR036975">
    <property type="entry name" value="Importin-a_IBB_sf"/>
</dbReference>
<dbReference type="InterPro" id="IPR024931">
    <property type="entry name" value="Importin_alpha"/>
</dbReference>
<dbReference type="PANTHER" id="PTHR23316">
    <property type="entry name" value="IMPORTIN ALPHA"/>
    <property type="match status" value="1"/>
</dbReference>
<dbReference type="Pfam" id="PF00514">
    <property type="entry name" value="Arm"/>
    <property type="match status" value="8"/>
</dbReference>
<dbReference type="Pfam" id="PF16186">
    <property type="entry name" value="Arm_3"/>
    <property type="match status" value="1"/>
</dbReference>
<dbReference type="Pfam" id="PF01749">
    <property type="entry name" value="IBB"/>
    <property type="match status" value="1"/>
</dbReference>
<dbReference type="PIRSF" id="PIRSF005673">
    <property type="entry name" value="Importin_alpha"/>
    <property type="match status" value="1"/>
</dbReference>
<dbReference type="SMART" id="SM00185">
    <property type="entry name" value="ARM"/>
    <property type="match status" value="8"/>
</dbReference>
<dbReference type="SUPFAM" id="SSF48371">
    <property type="entry name" value="ARM repeat"/>
    <property type="match status" value="1"/>
</dbReference>
<dbReference type="PROSITE" id="PS50176">
    <property type="entry name" value="ARM_REPEAT"/>
    <property type="match status" value="4"/>
</dbReference>
<dbReference type="PROSITE" id="PS51214">
    <property type="entry name" value="IBB"/>
    <property type="match status" value="1"/>
</dbReference>
<gene>
    <name type="primary">KPNA1</name>
    <name type="synonym">RCH2</name>
</gene>
<comment type="function">
    <text evidence="17 21 23 25">Functions in nuclear protein import as an adapter protein for nuclear receptor KPNB1 (PubMed:27713473, PubMed:7892216, PubMed:8692858). Binds specifically and directly to substrates containing either a simple or bipartite NLS motif (PubMed:27713473, PubMed:7892216, PubMed:8692858). Docking of the importin/substrate complex to the nuclear pore complex (NPC) is mediated by KPNB1 through binding to nucleoporin FxFG repeats and the complex is subsequently translocated through the pore by an energy requiring, Ran-dependent mechanism (PubMed:27713473, PubMed:7892216). At the nucleoplasmic side of the NPC, Ran binds to importin-beta and the three components separate and importin-alpha and -beta are re-exported from the nucleus to the cytoplasm where GTP hydrolysis releases Ran from importin (PubMed:7892216). The directionality of nuclear import is thought to be conferred by an asymmetric distribution of the GTP- and GDP-bound forms of Ran between the cytoplasm and nucleus (PubMed:7892216). Mediator of PR-DUB complex component BAP1 nuclear import; acts redundantly with KPNA2 and Transportin-1/TNPO1 (PubMed:35446349).</text>
</comment>
<comment type="function">
    <text evidence="7">(Microbial infection) In vitro, mediates the nuclear import of human cytomegalovirus UL84 by recognizing a non-classical NLS.</text>
</comment>
<comment type="subunit">
    <text evidence="2 3 9 14 15 16 18 19 21 22 23 24 25">Heterodimer; with KPNB1 (PubMed:7604027, PubMed:7892216, PubMed:8692858). Interacts with ANP32E (By similarity). Interacts with ZIC3 (By similarity). Interacts with NSMF; the interaction occurs in a calcium-independent manner after synaptic NMDA receptor stimulation and is required for nuclear import of NSMF but is competed by CABP1 (By similarity). Interacts with APEX1 (PubMed:15942031). Interacts with RAG1 (PubMed:8052633). Interacts with CTNNBL1 (via its N-terminal) (PubMed:21385873). Interacts with AICDA (via its NLS) (PubMed:21385873). Interacts with SNAI1 (via zinc fingers) (PubMed:21454664). Interacts with DCAF8 (PubMed:22500989). Interacts with ITSN1 isoform 2 (PubMed:29599122). Interacts with TALDO1 isoform 1 (By similarity). Interacts with the AMPK-mediated 'Ser-659' phosphorylated form of ACSS2; this interaction results in nuclear translocation of ACSS2 (PubMed:28552616). Interacts with BAP1 (via C-terminus); the interaction contributes to BAP1 nuclear localization (PubMed:35446349).</text>
</comment>
<comment type="subunit">
    <text evidence="7">(Microbial infection) Interacts with human cytomegalovirus/HCMV UL84.</text>
</comment>
<comment type="subunit">
    <text evidence="26">(Microbial infection) Interacts with HIV-1 Vpr.</text>
</comment>
<comment type="subunit">
    <text evidence="10 12">(Microbial infection) Interacts with ebolavirus protein VP24.</text>
</comment>
<comment type="subunit">
    <text evidence="11">(Microbial infection) Interacts with the venezuelan equine encephalitis virus protease nsP2; this interaction probably allows the active transport of protease nsP2 into the host nucleus.</text>
</comment>
<comment type="subunit">
    <text evidence="6">(Microbial infection) Interacts with Epstein-Barr virus EBNA1; this interaction allows the nuclear import of EBNA1.</text>
</comment>
<comment type="subunit">
    <text evidence="20">(Microbial infection) Interacts with human parainfluenza virus type 2 proteins P and V.</text>
</comment>
<comment type="interaction">
    <interactant intactId="EBI-358383">
        <id>P52294</id>
    </interactant>
    <interactant intactId="EBI-3834328">
        <id>Q9GZX7</id>
        <label>AICDA</label>
    </interactant>
    <organismsDiffer>false</organismsDiffer>
    <experiments>2</experiments>
</comment>
<comment type="interaction">
    <interactant intactId="EBI-358383">
        <id>P52294</id>
    </interactant>
    <interactant intactId="EBI-762428">
        <id>Q92688</id>
        <label>ANP32B</label>
    </interactant>
    <organismsDiffer>false</organismsDiffer>
    <experiments>9</experiments>
</comment>
<comment type="interaction">
    <interactant intactId="EBI-358383">
        <id>P52294</id>
    </interactant>
    <interactant intactId="EBI-633400">
        <id>Q9HAZ1</id>
        <label>CLK4</label>
    </interactant>
    <organismsDiffer>false</organismsDiffer>
    <experiments>3</experiments>
</comment>
<comment type="interaction">
    <interactant intactId="EBI-358383">
        <id>P52294</id>
    </interactant>
    <interactant intactId="EBI-740686">
        <id>Q5TAQ9</id>
        <label>DCAF8</label>
    </interactant>
    <organismsDiffer>false</organismsDiffer>
    <experiments>2</experiments>
</comment>
<comment type="interaction">
    <interactant intactId="EBI-358383">
        <id>P52294</id>
    </interactant>
    <interactant intactId="EBI-8527352">
        <id>Q13255</id>
        <label>GRM1</label>
    </interactant>
    <organismsDiffer>false</organismsDiffer>
    <experiments>2</experiments>
</comment>
<comment type="interaction">
    <interactant intactId="EBI-358383">
        <id>P52294</id>
    </interactant>
    <interactant intactId="EBI-286758">
        <id>Q14974</id>
        <label>KPNB1</label>
    </interactant>
    <organismsDiffer>false</organismsDiffer>
    <experiments>5</experiments>
</comment>
<comment type="interaction">
    <interactant intactId="EBI-358383">
        <id>P52294</id>
    </interactant>
    <interactant intactId="EBI-968218">
        <id>P20700</id>
        <label>LMNB1</label>
    </interactant>
    <organismsDiffer>false</organismsDiffer>
    <experiments>5</experiments>
</comment>
<comment type="interaction">
    <interactant intactId="EBI-358383">
        <id>P52294</id>
    </interactant>
    <interactant intactId="EBI-5324932">
        <id>Q9BQ69</id>
        <label>MACROD1</label>
    </interactant>
    <organismsDiffer>false</organismsDiffer>
    <experiments>3</experiments>
</comment>
<comment type="interaction">
    <interactant intactId="EBI-358383">
        <id>P52294</id>
    </interactant>
    <interactant intactId="EBI-3917542">
        <id>Q9HAN9</id>
        <label>NMNAT1</label>
    </interactant>
    <organismsDiffer>false</organismsDiffer>
    <experiments>3</experiments>
</comment>
<comment type="interaction">
    <interactant intactId="EBI-358383">
        <id>P52294</id>
    </interactant>
    <interactant intactId="EBI-2371082">
        <id>Q9UKX7</id>
        <label>NUP50</label>
    </interactant>
    <organismsDiffer>false</organismsDiffer>
    <experiments>11</experiments>
</comment>
<comment type="interaction">
    <interactant intactId="EBI-358383">
        <id>P52294</id>
    </interactant>
    <interactant intactId="EBI-5452779">
        <id>Q9BUI4</id>
        <label>POLR3C</label>
    </interactant>
    <organismsDiffer>false</organismsDiffer>
    <experiments>4</experiments>
</comment>
<comment type="interaction">
    <interactant intactId="EBI-358383">
        <id>P52294</id>
    </interactant>
    <interactant intactId="EBI-744603">
        <id>Q15637</id>
        <label>SF1</label>
    </interactant>
    <organismsDiffer>false</organismsDiffer>
    <experiments>3</experiments>
</comment>
<comment type="interaction">
    <interactant intactId="EBI-358383">
        <id>P52294</id>
    </interactant>
    <interactant intactId="EBI-1057697">
        <id>P42224</id>
        <label>STAT1</label>
    </interactant>
    <organismsDiffer>false</organismsDiffer>
    <experiments>4</experiments>
</comment>
<comment type="interaction">
    <interactant intactId="EBI-358383">
        <id>P52294</id>
    </interactant>
    <interactant intactId="EBI-712521">
        <id>Q16594</id>
        <label>TAF9</label>
    </interactant>
    <organismsDiffer>false</organismsDiffer>
    <experiments>4</experiments>
</comment>
<comment type="interaction">
    <interactant intactId="EBI-358383">
        <id>P52294</id>
    </interactant>
    <interactant intactId="EBI-25641007">
        <id>K9N643</id>
        <label>ORF4b</label>
    </interactant>
    <organismsDiffer>true</organismsDiffer>
    <experiments>3</experiments>
</comment>
<comment type="interaction">
    <interactant intactId="EBI-358383">
        <id>P52294</id>
    </interactant>
    <interactant intactId="EBI-6050648">
        <id>B4URF7</id>
        <label>PB2</label>
    </interactant>
    <organismsDiffer>true</organismsDiffer>
    <experiments>2</experiments>
</comment>
<comment type="interaction">
    <interactant intactId="EBI-358383">
        <id>P52294</id>
    </interactant>
    <interactant intactId="EBI-6051231">
        <id>P31345</id>
        <label>PB2</label>
    </interactant>
    <organismsDiffer>true</organismsDiffer>
    <experiments>3</experiments>
</comment>
<comment type="interaction">
    <interactant intactId="EBI-358383">
        <id>P52294</id>
    </interactant>
    <interactant intactId="EBI-6863741">
        <id>PRO_0000037548</id>
        <dbReference type="UniProtKB" id="Q9WMX2"/>
    </interactant>
    <organismsDiffer>true</organismsDiffer>
    <experiments>2</experiments>
</comment>
<comment type="subcellular location">
    <subcellularLocation>
        <location evidence="22 23">Cytoplasm</location>
    </subcellularLocation>
    <subcellularLocation>
        <location evidence="22 23">Nucleus</location>
    </subcellularLocation>
</comment>
<comment type="tissue specificity">
    <text evidence="23">Expressed ubiquitously.</text>
</comment>
<comment type="domain">
    <text evidence="25">Consists of an N-terminal hydrophilic region, a hydrophobic central region composed of 10 repeats, and a short hydrophilic C-terminus. The N-terminal hydrophilic region contains the importin beta binding domain (IBB domain), which is sufficient for binding importin beta and essential for nuclear protein import.</text>
</comment>
<comment type="domain">
    <text evidence="1">The IBB domain is thought to act as an intrasteric autoregulatory sequence by interacting with the internal autoinhibitory NLS. Binding of KPNB1 probably overlaps the internal NLS and contributes to a high affinity for cytoplasmic NLS-containing cargo substrates. After dissociation of the importin/substrate complex in the nucleus the internal autohibitory NLS contributes to a low affinity for nuclear NLS-containing proteins (By similarity).</text>
</comment>
<comment type="domain">
    <text evidence="1">The major and minor NLS binding sites are mainly involved in recognition of simple or bipartite NLS motifs. Structurally located within in a helical surface groove they contain several conserved Trp and Asn residues of the corresponding third helices (H3) of ARM repeats which mainly contribute to binding (By similarity).</text>
</comment>
<comment type="PTM">
    <text evidence="13">Polyubiquitinated in the presence of RAG1 (in vitro).</text>
</comment>
<comment type="similarity">
    <text evidence="32">Belongs to the importin alpha family.</text>
</comment>
<feature type="chain" id="PRO_0000120719" description="Importin subunit alpha-5">
    <location>
        <begin position="1"/>
        <end position="538"/>
    </location>
</feature>
<feature type="initiator methionine" description="Removed; alternate" evidence="33">
    <location>
        <position position="1"/>
    </location>
</feature>
<feature type="chain" id="PRO_0000424491" description="Importin subunit alpha-5, N-terminally processed">
    <location>
        <begin position="2"/>
        <end position="538"/>
    </location>
</feature>
<feature type="domain" description="IBB" evidence="4">
    <location>
        <begin position="1"/>
        <end position="57"/>
    </location>
</feature>
<feature type="repeat" description="ARM 1; truncated">
    <location>
        <begin position="77"/>
        <end position="117"/>
    </location>
</feature>
<feature type="repeat" description="ARM 2">
    <location>
        <begin position="118"/>
        <end position="161"/>
    </location>
</feature>
<feature type="repeat" description="ARM 3">
    <location>
        <begin position="162"/>
        <end position="206"/>
    </location>
</feature>
<feature type="repeat" description="ARM 4">
    <location>
        <begin position="207"/>
        <end position="245"/>
    </location>
</feature>
<feature type="repeat" description="ARM 5">
    <location>
        <begin position="246"/>
        <end position="290"/>
    </location>
</feature>
<feature type="repeat" description="ARM 6">
    <location>
        <begin position="291"/>
        <end position="330"/>
    </location>
</feature>
<feature type="repeat" description="ARM 7">
    <location>
        <begin position="331"/>
        <end position="372"/>
    </location>
</feature>
<feature type="repeat" description="ARM 8">
    <location>
        <begin position="373"/>
        <end position="412"/>
    </location>
</feature>
<feature type="repeat" description="ARM 9">
    <location>
        <begin position="413"/>
        <end position="457"/>
    </location>
</feature>
<feature type="repeat" description="ARM 10; atypical">
    <location>
        <begin position="460"/>
        <end position="504"/>
    </location>
</feature>
<feature type="region of interest" description="Disordered" evidence="5">
    <location>
        <begin position="1"/>
        <end position="36"/>
    </location>
</feature>
<feature type="region of interest" description="NLS binding site (major)" evidence="1">
    <location>
        <begin position="149"/>
        <end position="241"/>
    </location>
</feature>
<feature type="region of interest" description="Binding to RAG1" evidence="24">
    <location>
        <begin position="245"/>
        <end position="437"/>
    </location>
</feature>
<feature type="region of interest" description="NLS binding site (minor)" evidence="1">
    <location>
        <begin position="318"/>
        <end position="406"/>
    </location>
</feature>
<feature type="short sequence motif" description="Nuclear localization signal" evidence="1">
    <location>
        <begin position="42"/>
        <end position="51"/>
    </location>
</feature>
<feature type="compositionally biased region" description="Basic and acidic residues" evidence="5">
    <location>
        <begin position="20"/>
        <end position="36"/>
    </location>
</feature>
<feature type="modified residue" description="N-acetylmethionine" evidence="33">
    <location>
        <position position="1"/>
    </location>
</feature>
<feature type="modified residue" description="N-acetylthreonine; in Importin subunit alpha-5, N-terminally processed" evidence="33">
    <location>
        <position position="2"/>
    </location>
</feature>
<feature type="modified residue" description="Phosphothreonine" evidence="34">
    <location>
        <position position="3"/>
    </location>
</feature>
<feature type="modified residue" description="Phosphoserine" evidence="35">
    <location>
        <position position="63"/>
    </location>
</feature>
<feature type="sequence variant" id="VAR_050002" description="In dbSNP:rs4678193." evidence="8 27 28 29">
    <original>S</original>
    <variation>N</variation>
    <location>
        <position position="73"/>
    </location>
</feature>
<feature type="sequence conflict" description="In Ref. 1; AAC60648." evidence="32" ref="1">
    <original>T</original>
    <variation>S</variation>
    <location>
        <position position="142"/>
    </location>
</feature>
<feature type="sequence conflict" description="In Ref. 1; AAC60648." evidence="32" ref="1">
    <original>G</original>
    <variation>R</variation>
    <location>
        <position position="169"/>
    </location>
</feature>
<feature type="helix" evidence="36">
    <location>
        <begin position="85"/>
        <end position="92"/>
    </location>
</feature>
<feature type="helix" evidence="36">
    <location>
        <begin position="96"/>
        <end position="111"/>
    </location>
</feature>
<feature type="strand" evidence="36">
    <location>
        <begin position="112"/>
        <end position="115"/>
    </location>
</feature>
<feature type="helix" evidence="36">
    <location>
        <begin position="118"/>
        <end position="122"/>
    </location>
</feature>
<feature type="helix" evidence="36">
    <location>
        <begin position="127"/>
        <end position="135"/>
    </location>
</feature>
<feature type="helix" evidence="36">
    <location>
        <begin position="141"/>
        <end position="155"/>
    </location>
</feature>
<feature type="helix" evidence="36">
    <location>
        <begin position="159"/>
        <end position="167"/>
    </location>
</feature>
<feature type="helix" evidence="36">
    <location>
        <begin position="170"/>
        <end position="177"/>
    </location>
</feature>
<feature type="helix" evidence="36">
    <location>
        <begin position="183"/>
        <end position="197"/>
    </location>
</feature>
<feature type="helix" evidence="36">
    <location>
        <begin position="201"/>
        <end position="209"/>
    </location>
</feature>
<feature type="helix" evidence="36">
    <location>
        <begin position="213"/>
        <end position="219"/>
    </location>
</feature>
<feature type="helix" evidence="36">
    <location>
        <begin position="226"/>
        <end position="240"/>
    </location>
</feature>
<feature type="strand" evidence="36">
    <location>
        <begin position="243"/>
        <end position="245"/>
    </location>
</feature>
<feature type="helix" evidence="36">
    <location>
        <begin position="249"/>
        <end position="251"/>
    </location>
</feature>
<feature type="helix" evidence="36">
    <location>
        <begin position="253"/>
        <end position="255"/>
    </location>
</feature>
<feature type="helix" evidence="36">
    <location>
        <begin position="256"/>
        <end position="262"/>
    </location>
</feature>
<feature type="helix" evidence="36">
    <location>
        <begin position="268"/>
        <end position="281"/>
    </location>
</feature>
<feature type="strand" evidence="36">
    <location>
        <begin position="283"/>
        <end position="285"/>
    </location>
</feature>
<feature type="helix" evidence="36">
    <location>
        <begin position="286"/>
        <end position="294"/>
    </location>
</feature>
<feature type="turn" evidence="36">
    <location>
        <begin position="295"/>
        <end position="297"/>
    </location>
</feature>
<feature type="helix" evidence="36">
    <location>
        <begin position="298"/>
        <end position="304"/>
    </location>
</feature>
<feature type="helix" evidence="36">
    <location>
        <begin position="310"/>
        <end position="323"/>
    </location>
</feature>
<feature type="helix" evidence="36">
    <location>
        <begin position="328"/>
        <end position="335"/>
    </location>
</feature>
<feature type="turn" evidence="36">
    <location>
        <begin position="336"/>
        <end position="338"/>
    </location>
</feature>
<feature type="helix" evidence="36">
    <location>
        <begin position="339"/>
        <end position="346"/>
    </location>
</feature>
<feature type="helix" evidence="36">
    <location>
        <begin position="352"/>
        <end position="365"/>
    </location>
</feature>
<feature type="helix" evidence="36">
    <location>
        <begin position="370"/>
        <end position="378"/>
    </location>
</feature>
<feature type="helix" evidence="36">
    <location>
        <begin position="381"/>
        <end position="391"/>
    </location>
</feature>
<feature type="helix" evidence="36">
    <location>
        <begin position="394"/>
        <end position="410"/>
    </location>
</feature>
<feature type="helix" evidence="36">
    <location>
        <begin position="413"/>
        <end position="422"/>
    </location>
</feature>
<feature type="helix" evidence="36">
    <location>
        <begin position="425"/>
        <end position="430"/>
    </location>
</feature>
<feature type="helix" evidence="36">
    <location>
        <begin position="431"/>
        <end position="433"/>
    </location>
</feature>
<feature type="helix" evidence="36">
    <location>
        <begin position="437"/>
        <end position="460"/>
    </location>
</feature>
<feature type="strand" evidence="37">
    <location>
        <begin position="461"/>
        <end position="463"/>
    </location>
</feature>
<feature type="helix" evidence="36">
    <location>
        <begin position="468"/>
        <end position="476"/>
    </location>
</feature>
<feature type="helix" evidence="36">
    <location>
        <begin position="478"/>
        <end position="485"/>
    </location>
</feature>
<feature type="helix" evidence="36">
    <location>
        <begin position="487"/>
        <end position="504"/>
    </location>
</feature>
<proteinExistence type="evidence at protein level"/>